<proteinExistence type="evidence at transcript level"/>
<name>SPIR1_DANRE</name>
<keyword id="KW-0009">Actin-binding</keyword>
<keyword id="KW-0025">Alternative splicing</keyword>
<keyword id="KW-1003">Cell membrane</keyword>
<keyword id="KW-0175">Coiled coil</keyword>
<keyword id="KW-0963">Cytoplasm</keyword>
<keyword id="KW-0968">Cytoplasmic vesicle</keyword>
<keyword id="KW-0206">Cytoskeleton</keyword>
<keyword id="KW-0472">Membrane</keyword>
<keyword id="KW-0653">Protein transport</keyword>
<keyword id="KW-1185">Reference proteome</keyword>
<keyword id="KW-0677">Repeat</keyword>
<keyword id="KW-0813">Transport</keyword>
<accession>Q1LYM3</accession>
<accession>Q08BK5</accession>
<comment type="function">
    <text evidence="1">Acts as an actin nucleation factor, remains associated with the slow-growing pointed end of the new filament. Involved in intracellular vesicle transport along actin fibers, providing a novel link between actin cytoskeleton dynamics and intracellular transport. Required for asymmetric spindle positioning and asymmetric cell division during meiosis. Required for normal formation of the cleavage furrow and for polar body extrusion during female germ cell meiosis. Also acts in the nucleus: together with FMN2, promotes assembly of nuclear actin filaments in response to DNA damage in order to facilitate movement of chromatin and repair factors after DNA damage. In addition, promotes innate immune signaling downstream of dsRNA sensing. Mechanistically, contributes to IRF3 phosphorylation and activation downstream of MAVS and upstream of TBK1.</text>
</comment>
<comment type="subcellular location">
    <subcellularLocation>
        <location evidence="2">Cytoplasm</location>
        <location evidence="2">Cytoskeleton</location>
    </subcellularLocation>
    <subcellularLocation>
        <location evidence="2">Cytoplasm</location>
        <location evidence="2">Cytosol</location>
    </subcellularLocation>
    <subcellularLocation>
        <location evidence="2">Cleavage furrow</location>
    </subcellularLocation>
    <subcellularLocation>
        <location evidence="1">Cytoplasm</location>
        <location evidence="1">Perinuclear region</location>
    </subcellularLocation>
    <subcellularLocation>
        <location evidence="2">Cell membrane</location>
        <topology evidence="2">Peripheral membrane protein</topology>
        <orientation evidence="2">Cytoplasmic side</orientation>
    </subcellularLocation>
    <subcellularLocation>
        <location evidence="2">Cytoplasmic vesicle membrane</location>
        <topology evidence="2">Peripheral membrane protein</topology>
        <orientation evidence="2">Cytoplasmic side</orientation>
    </subcellularLocation>
</comment>
<comment type="alternative products">
    <event type="alternative splicing"/>
    <isoform>
        <id>Q1LYM3-1</id>
        <name>1</name>
        <sequence type="displayed"/>
    </isoform>
    <isoform>
        <id>Q1LYM3-2</id>
        <name>2</name>
        <sequence type="described" ref="VSP_052597 VSP_052598"/>
    </isoform>
</comment>
<comment type="domain">
    <text evidence="3">Binds to actin monomers via the WH2 domain.</text>
</comment>
<comment type="domain">
    <text evidence="1">The Spir-box targets binding to intracellular membrane structures.</text>
</comment>
<comment type="similarity">
    <text evidence="8">Belongs to the spire family.</text>
</comment>
<gene>
    <name evidence="1" type="primary">spire1</name>
    <name type="ORF">si:ch211-215i13.7</name>
    <name type="ORF">zgc:153436</name>
</gene>
<protein>
    <recommendedName>
        <fullName>Protein spire homolog 1</fullName>
    </recommendedName>
</protein>
<evidence type="ECO:0000250" key="1">
    <source>
        <dbReference type="UniProtKB" id="Q08AE8"/>
    </source>
</evidence>
<evidence type="ECO:0000250" key="2">
    <source>
        <dbReference type="UniProtKB" id="Q52KF3"/>
    </source>
</evidence>
<evidence type="ECO:0000250" key="3">
    <source>
        <dbReference type="UniProtKB" id="Q9U1K1"/>
    </source>
</evidence>
<evidence type="ECO:0000255" key="4"/>
<evidence type="ECO:0000255" key="5">
    <source>
        <dbReference type="PROSITE-ProRule" id="PRU00709"/>
    </source>
</evidence>
<evidence type="ECO:0000256" key="6">
    <source>
        <dbReference type="SAM" id="MobiDB-lite"/>
    </source>
</evidence>
<evidence type="ECO:0000303" key="7">
    <source ref="2"/>
</evidence>
<evidence type="ECO:0000305" key="8"/>
<evidence type="ECO:0000312" key="9">
    <source>
        <dbReference type="EMBL" id="AAI24675.1"/>
    </source>
</evidence>
<evidence type="ECO:0000312" key="10">
    <source>
        <dbReference type="EMBL" id="CAK11121.1"/>
    </source>
</evidence>
<sequence>MTDGGMLISPSALQDPGDGARPEDIAMDCTDGEEELCLEEILTLYSQPINEEQAWAVCYQCCRWLTQKHRRKETGVSPPGRIAGPGDVRIRKDGNVKLYQPSNPDKHTPPSSSIEIIESLGIMIYKALDYGLKEHEERELSPPLEQLIDLMTNMADTETDCPDEGYEATEEEDEGEEENAEVSNVRGYRDIISLCLSHLPSPSDAPNHYQAVCRALYAETKELRTFLEKIKSAKENLRKMEGETEEPVRDLNELQNADWARFWVQVMRDLRHGVKLKKVQERQYNPLAIEYQLTPYEMLMDDIRSKRYKLRKVMVNGDIPPRLKKSAHEIILEFIRSRPPLNPVSARKLKPHAPQPPTLHERILEEIRSERKLRPVSPDMIRRSRLGAGKSISTPQDLFRSSDIPDGPRKLAISTLSLANGTSPARSPVNGVAGGHSLSQRKRLLKAPTLAELDSSDSEEEQSTRKSDSSSSISTSLVEDTSPESVMGKKPPPQFLPISSTPQPDKRIAPQRRHSIEKEAPTNIRHFLPPSRQNSKSLAHALGSGHAEEFCFPVECLTLTVEEVMHIRQVLVKAELEKFQQYKDIYNALKKGKLCFSCRSKKFSLFTWSYTCQFCKRPVCSQCCKKMKLPSKPHASLPISSLGPSILPKKEPGASSAPTDKTSSTSSHKKNSLQRSLSRSSKHGDRSSSKDELELPEQFTEDWSTMEVCVDCKKFINDIISNSRRNLSTKRARLHRRTHSVYSSSTSSSNYKPTERTIKEV</sequence>
<reference key="1">
    <citation type="journal article" date="2013" name="Nature">
        <title>The zebrafish reference genome sequence and its relationship to the human genome.</title>
        <authorList>
            <person name="Howe K."/>
            <person name="Clark M.D."/>
            <person name="Torroja C.F."/>
            <person name="Torrance J."/>
            <person name="Berthelot C."/>
            <person name="Muffato M."/>
            <person name="Collins J.E."/>
            <person name="Humphray S."/>
            <person name="McLaren K."/>
            <person name="Matthews L."/>
            <person name="McLaren S."/>
            <person name="Sealy I."/>
            <person name="Caccamo M."/>
            <person name="Churcher C."/>
            <person name="Scott C."/>
            <person name="Barrett J.C."/>
            <person name="Koch R."/>
            <person name="Rauch G.J."/>
            <person name="White S."/>
            <person name="Chow W."/>
            <person name="Kilian B."/>
            <person name="Quintais L.T."/>
            <person name="Guerra-Assuncao J.A."/>
            <person name="Zhou Y."/>
            <person name="Gu Y."/>
            <person name="Yen J."/>
            <person name="Vogel J.H."/>
            <person name="Eyre T."/>
            <person name="Redmond S."/>
            <person name="Banerjee R."/>
            <person name="Chi J."/>
            <person name="Fu B."/>
            <person name="Langley E."/>
            <person name="Maguire S.F."/>
            <person name="Laird G.K."/>
            <person name="Lloyd D."/>
            <person name="Kenyon E."/>
            <person name="Donaldson S."/>
            <person name="Sehra H."/>
            <person name="Almeida-King J."/>
            <person name="Loveland J."/>
            <person name="Trevanion S."/>
            <person name="Jones M."/>
            <person name="Quail M."/>
            <person name="Willey D."/>
            <person name="Hunt A."/>
            <person name="Burton J."/>
            <person name="Sims S."/>
            <person name="McLay K."/>
            <person name="Plumb B."/>
            <person name="Davis J."/>
            <person name="Clee C."/>
            <person name="Oliver K."/>
            <person name="Clark R."/>
            <person name="Riddle C."/>
            <person name="Elliot D."/>
            <person name="Threadgold G."/>
            <person name="Harden G."/>
            <person name="Ware D."/>
            <person name="Begum S."/>
            <person name="Mortimore B."/>
            <person name="Kerry G."/>
            <person name="Heath P."/>
            <person name="Phillimore B."/>
            <person name="Tracey A."/>
            <person name="Corby N."/>
            <person name="Dunn M."/>
            <person name="Johnson C."/>
            <person name="Wood J."/>
            <person name="Clark S."/>
            <person name="Pelan S."/>
            <person name="Griffiths G."/>
            <person name="Smith M."/>
            <person name="Glithero R."/>
            <person name="Howden P."/>
            <person name="Barker N."/>
            <person name="Lloyd C."/>
            <person name="Stevens C."/>
            <person name="Harley J."/>
            <person name="Holt K."/>
            <person name="Panagiotidis G."/>
            <person name="Lovell J."/>
            <person name="Beasley H."/>
            <person name="Henderson C."/>
            <person name="Gordon D."/>
            <person name="Auger K."/>
            <person name="Wright D."/>
            <person name="Collins J."/>
            <person name="Raisen C."/>
            <person name="Dyer L."/>
            <person name="Leung K."/>
            <person name="Robertson L."/>
            <person name="Ambridge K."/>
            <person name="Leongamornlert D."/>
            <person name="McGuire S."/>
            <person name="Gilderthorp R."/>
            <person name="Griffiths C."/>
            <person name="Manthravadi D."/>
            <person name="Nichol S."/>
            <person name="Barker G."/>
            <person name="Whitehead S."/>
            <person name="Kay M."/>
            <person name="Brown J."/>
            <person name="Murnane C."/>
            <person name="Gray E."/>
            <person name="Humphries M."/>
            <person name="Sycamore N."/>
            <person name="Barker D."/>
            <person name="Saunders D."/>
            <person name="Wallis J."/>
            <person name="Babbage A."/>
            <person name="Hammond S."/>
            <person name="Mashreghi-Mohammadi M."/>
            <person name="Barr L."/>
            <person name="Martin S."/>
            <person name="Wray P."/>
            <person name="Ellington A."/>
            <person name="Matthews N."/>
            <person name="Ellwood M."/>
            <person name="Woodmansey R."/>
            <person name="Clark G."/>
            <person name="Cooper J."/>
            <person name="Tromans A."/>
            <person name="Grafham D."/>
            <person name="Skuce C."/>
            <person name="Pandian R."/>
            <person name="Andrews R."/>
            <person name="Harrison E."/>
            <person name="Kimberley A."/>
            <person name="Garnett J."/>
            <person name="Fosker N."/>
            <person name="Hall R."/>
            <person name="Garner P."/>
            <person name="Kelly D."/>
            <person name="Bird C."/>
            <person name="Palmer S."/>
            <person name="Gehring I."/>
            <person name="Berger A."/>
            <person name="Dooley C.M."/>
            <person name="Ersan-Urun Z."/>
            <person name="Eser C."/>
            <person name="Geiger H."/>
            <person name="Geisler M."/>
            <person name="Karotki L."/>
            <person name="Kirn A."/>
            <person name="Konantz J."/>
            <person name="Konantz M."/>
            <person name="Oberlander M."/>
            <person name="Rudolph-Geiger S."/>
            <person name="Teucke M."/>
            <person name="Lanz C."/>
            <person name="Raddatz G."/>
            <person name="Osoegawa K."/>
            <person name="Zhu B."/>
            <person name="Rapp A."/>
            <person name="Widaa S."/>
            <person name="Langford C."/>
            <person name="Yang F."/>
            <person name="Schuster S.C."/>
            <person name="Carter N.P."/>
            <person name="Harrow J."/>
            <person name="Ning Z."/>
            <person name="Herrero J."/>
            <person name="Searle S.M."/>
            <person name="Enright A."/>
            <person name="Geisler R."/>
            <person name="Plasterk R.H."/>
            <person name="Lee C."/>
            <person name="Westerfield M."/>
            <person name="de Jong P.J."/>
            <person name="Zon L.I."/>
            <person name="Postlethwait J.H."/>
            <person name="Nusslein-Volhard C."/>
            <person name="Hubbard T.J."/>
            <person name="Roest Crollius H."/>
            <person name="Rogers J."/>
            <person name="Stemple D.L."/>
        </authorList>
    </citation>
    <scope>NUCLEOTIDE SEQUENCE [LARGE SCALE GENOMIC DNA]</scope>
    <source>
        <strain>Tuebingen</strain>
    </source>
</reference>
<reference evidence="8 10" key="2">
    <citation type="submission" date="2006-10" db="EMBL/GenBank/DDBJ databases">
        <authorList>
            <consortium name="NIH - Zebrafish Gene Collection (ZGC) project"/>
        </authorList>
    </citation>
    <scope>NUCLEOTIDE SEQUENCE [LARGE SCALE MRNA] (ISOFORM 2)</scope>
    <source>
        <tissue evidence="9">Eye</tissue>
    </source>
</reference>
<dbReference type="EMBL" id="AL807244">
    <property type="protein sequence ID" value="CAP09404.1"/>
    <property type="molecule type" value="Genomic_DNA"/>
</dbReference>
<dbReference type="EMBL" id="BX004966">
    <property type="protein sequence ID" value="CAP09404.1"/>
    <property type="status" value="JOINED"/>
    <property type="molecule type" value="Genomic_DNA"/>
</dbReference>
<dbReference type="EMBL" id="BX004966">
    <property type="protein sequence ID" value="CAK11121.1"/>
    <property type="molecule type" value="Genomic_DNA"/>
</dbReference>
<dbReference type="EMBL" id="AL807244">
    <property type="protein sequence ID" value="CAK11121.1"/>
    <property type="status" value="JOINED"/>
    <property type="molecule type" value="Genomic_DNA"/>
</dbReference>
<dbReference type="EMBL" id="BC124674">
    <property type="protein sequence ID" value="AAI24675.1"/>
    <property type="molecule type" value="mRNA"/>
</dbReference>
<dbReference type="RefSeq" id="XP_005159679.1">
    <molecule id="Q1LYM3-1"/>
    <property type="nucleotide sequence ID" value="XM_005159622.3"/>
</dbReference>
<dbReference type="SMR" id="Q1LYM3"/>
<dbReference type="FunCoup" id="Q1LYM3">
    <property type="interactions" value="1187"/>
</dbReference>
<dbReference type="STRING" id="7955.ENSDARP00000072529"/>
<dbReference type="PaxDb" id="7955-ENSDARP00000072529"/>
<dbReference type="Ensembl" id="ENSDART00000078066">
    <molecule id="Q1LYM3-1"/>
    <property type="protein sequence ID" value="ENSDARP00000072529"/>
    <property type="gene ID" value="ENSDARG00000035868"/>
</dbReference>
<dbReference type="GeneID" id="557962"/>
<dbReference type="KEGG" id="dre:557962"/>
<dbReference type="AGR" id="ZFIN:ZDB-GENE-061013-119"/>
<dbReference type="CTD" id="557962"/>
<dbReference type="ZFIN" id="ZDB-GENE-061013-119">
    <property type="gene designation" value="spire1a"/>
</dbReference>
<dbReference type="eggNOG" id="ENOG502QQPN">
    <property type="taxonomic scope" value="Eukaryota"/>
</dbReference>
<dbReference type="InParanoid" id="Q1LYM3"/>
<dbReference type="OrthoDB" id="10043757at2759"/>
<dbReference type="PhylomeDB" id="Q1LYM3"/>
<dbReference type="TreeFam" id="TF326239"/>
<dbReference type="PRO" id="PR:Q1LYM3"/>
<dbReference type="Proteomes" id="UP000000437">
    <property type="component" value="Alternate scaffold 19"/>
</dbReference>
<dbReference type="Proteomes" id="UP000000437">
    <property type="component" value="Chromosome 19"/>
</dbReference>
<dbReference type="Bgee" id="ENSDARG00000035868">
    <property type="expression patterns" value="Expressed in mature ovarian follicle and 18 other cell types or tissues"/>
</dbReference>
<dbReference type="ExpressionAtlas" id="Q1LYM3">
    <property type="expression patterns" value="baseline"/>
</dbReference>
<dbReference type="GO" id="GO:0005938">
    <property type="term" value="C:cell cortex"/>
    <property type="evidence" value="ECO:0000318"/>
    <property type="project" value="GO_Central"/>
</dbReference>
<dbReference type="GO" id="GO:0032154">
    <property type="term" value="C:cleavage furrow"/>
    <property type="evidence" value="ECO:0007669"/>
    <property type="project" value="UniProtKB-SubCell"/>
</dbReference>
<dbReference type="GO" id="GO:0030659">
    <property type="term" value="C:cytoplasmic vesicle membrane"/>
    <property type="evidence" value="ECO:0000318"/>
    <property type="project" value="GO_Central"/>
</dbReference>
<dbReference type="GO" id="GO:0005856">
    <property type="term" value="C:cytoskeleton"/>
    <property type="evidence" value="ECO:0007669"/>
    <property type="project" value="UniProtKB-SubCell"/>
</dbReference>
<dbReference type="GO" id="GO:0005829">
    <property type="term" value="C:cytosol"/>
    <property type="evidence" value="ECO:0007669"/>
    <property type="project" value="UniProtKB-SubCell"/>
</dbReference>
<dbReference type="GO" id="GO:0048471">
    <property type="term" value="C:perinuclear region of cytoplasm"/>
    <property type="evidence" value="ECO:0007669"/>
    <property type="project" value="UniProtKB-SubCell"/>
</dbReference>
<dbReference type="GO" id="GO:0003779">
    <property type="term" value="F:actin binding"/>
    <property type="evidence" value="ECO:0007669"/>
    <property type="project" value="UniProtKB-KW"/>
</dbReference>
<dbReference type="GO" id="GO:0008017">
    <property type="term" value="F:microtubule binding"/>
    <property type="evidence" value="ECO:0000318"/>
    <property type="project" value="GO_Central"/>
</dbReference>
<dbReference type="GO" id="GO:0051639">
    <property type="term" value="P:actin filament network formation"/>
    <property type="evidence" value="ECO:0000318"/>
    <property type="project" value="GO_Central"/>
</dbReference>
<dbReference type="GO" id="GO:0045010">
    <property type="term" value="P:actin nucleation"/>
    <property type="evidence" value="ECO:0007669"/>
    <property type="project" value="InterPro"/>
</dbReference>
<dbReference type="GO" id="GO:0036089">
    <property type="term" value="P:cleavage furrow formation"/>
    <property type="evidence" value="ECO:0000318"/>
    <property type="project" value="GO_Central"/>
</dbReference>
<dbReference type="GO" id="GO:0051295">
    <property type="term" value="P:establishment of meiotic spindle localization"/>
    <property type="evidence" value="ECO:0000318"/>
    <property type="project" value="GO_Central"/>
</dbReference>
<dbReference type="GO" id="GO:0070649">
    <property type="term" value="P:formin-nucleated actin cable assembly"/>
    <property type="evidence" value="ECO:0000250"/>
    <property type="project" value="UniProtKB"/>
</dbReference>
<dbReference type="GO" id="GO:0048193">
    <property type="term" value="P:Golgi vesicle transport"/>
    <property type="evidence" value="ECO:0000318"/>
    <property type="project" value="GO_Central"/>
</dbReference>
<dbReference type="GO" id="GO:0046907">
    <property type="term" value="P:intracellular transport"/>
    <property type="evidence" value="ECO:0000318"/>
    <property type="project" value="GO_Central"/>
</dbReference>
<dbReference type="GO" id="GO:0040038">
    <property type="term" value="P:polar body extrusion after meiotic divisions"/>
    <property type="evidence" value="ECO:0000318"/>
    <property type="project" value="GO_Central"/>
</dbReference>
<dbReference type="GO" id="GO:2000781">
    <property type="term" value="P:positive regulation of double-strand break repair"/>
    <property type="evidence" value="ECO:0000250"/>
    <property type="project" value="UniProtKB"/>
</dbReference>
<dbReference type="GO" id="GO:0015031">
    <property type="term" value="P:protein transport"/>
    <property type="evidence" value="ECO:0007669"/>
    <property type="project" value="UniProtKB-KW"/>
</dbReference>
<dbReference type="CDD" id="cd15767">
    <property type="entry name" value="FYVE_SPIR1"/>
    <property type="match status" value="1"/>
</dbReference>
<dbReference type="CDD" id="cd22078">
    <property type="entry name" value="WH2_Spire1_r2-like"/>
    <property type="match status" value="1"/>
</dbReference>
<dbReference type="CDD" id="cd22080">
    <property type="entry name" value="WH2_Spire1_r4"/>
    <property type="match status" value="1"/>
</dbReference>
<dbReference type="CDD" id="cd22065">
    <property type="entry name" value="WH2_Spire_1-2_r1"/>
    <property type="match status" value="1"/>
</dbReference>
<dbReference type="FunFam" id="1.10.510.10:FF:000455">
    <property type="entry name" value="protein spire homolog 1 isoform X1"/>
    <property type="match status" value="1"/>
</dbReference>
<dbReference type="Gene3D" id="1.10.510.10">
    <property type="entry name" value="Transferase(Phosphotransferase) domain 1"/>
    <property type="match status" value="1"/>
</dbReference>
<dbReference type="Gene3D" id="3.30.40.10">
    <property type="entry name" value="Zinc/RING finger domain, C3HC4 (zinc finger)"/>
    <property type="match status" value="1"/>
</dbReference>
<dbReference type="InterPro" id="IPR011019">
    <property type="entry name" value="KIND_dom"/>
</dbReference>
<dbReference type="InterPro" id="IPR029905">
    <property type="entry name" value="Spir-1_FYVE-rel_dom"/>
</dbReference>
<dbReference type="InterPro" id="IPR029901">
    <property type="entry name" value="Spire"/>
</dbReference>
<dbReference type="InterPro" id="IPR011011">
    <property type="entry name" value="Znf_FYVE_PHD"/>
</dbReference>
<dbReference type="InterPro" id="IPR013083">
    <property type="entry name" value="Znf_RING/FYVE/PHD"/>
</dbReference>
<dbReference type="PANTHER" id="PTHR21345:SF8">
    <property type="entry name" value="PROTEIN SPIRE HOMOLOG 1"/>
    <property type="match status" value="1"/>
</dbReference>
<dbReference type="PANTHER" id="PTHR21345">
    <property type="entry name" value="SPIRE"/>
    <property type="match status" value="1"/>
</dbReference>
<dbReference type="Pfam" id="PF16474">
    <property type="entry name" value="KIND"/>
    <property type="match status" value="1"/>
</dbReference>
<dbReference type="SMART" id="SM00750">
    <property type="entry name" value="KIND"/>
    <property type="match status" value="1"/>
</dbReference>
<dbReference type="SUPFAM" id="SSF57903">
    <property type="entry name" value="FYVE/PHD zinc finger"/>
    <property type="match status" value="1"/>
</dbReference>
<dbReference type="PROSITE" id="PS51377">
    <property type="entry name" value="KIND"/>
    <property type="match status" value="1"/>
</dbReference>
<feature type="chain" id="PRO_0000309572" description="Protein spire homolog 1">
    <location>
        <begin position="1"/>
        <end position="761"/>
    </location>
</feature>
<feature type="domain" description="KIND" evidence="5">
    <location>
        <begin position="36"/>
        <end position="223"/>
    </location>
</feature>
<feature type="domain" description="WH2 1" evidence="4">
    <location>
        <begin position="295"/>
        <end position="313"/>
    </location>
</feature>
<feature type="domain" description="WH2 2" evidence="4">
    <location>
        <begin position="359"/>
        <end position="376"/>
    </location>
</feature>
<feature type="region of interest" description="Disordered" evidence="6">
    <location>
        <begin position="1"/>
        <end position="23"/>
    </location>
</feature>
<feature type="region of interest" description="Disordered" evidence="6">
    <location>
        <begin position="160"/>
        <end position="183"/>
    </location>
</feature>
<feature type="region of interest" description="Disordered" evidence="6">
    <location>
        <begin position="375"/>
        <end position="406"/>
    </location>
</feature>
<feature type="region of interest" description="Disordered" evidence="6">
    <location>
        <begin position="419"/>
        <end position="539"/>
    </location>
</feature>
<feature type="region of interest" description="Spir-box">
    <location>
        <begin position="557"/>
        <end position="577"/>
    </location>
</feature>
<feature type="region of interest" description="Disordered" evidence="6">
    <location>
        <begin position="630"/>
        <end position="694"/>
    </location>
</feature>
<feature type="region of interest" description="Disordered" evidence="6">
    <location>
        <begin position="728"/>
        <end position="761"/>
    </location>
</feature>
<feature type="coiled-coil region" evidence="4">
    <location>
        <begin position="218"/>
        <end position="246"/>
    </location>
</feature>
<feature type="compositionally biased region" description="Acidic residues" evidence="6">
    <location>
        <begin position="160"/>
        <end position="180"/>
    </location>
</feature>
<feature type="compositionally biased region" description="Low complexity" evidence="6">
    <location>
        <begin position="469"/>
        <end position="480"/>
    </location>
</feature>
<feature type="compositionally biased region" description="Basic and acidic residues" evidence="6">
    <location>
        <begin position="504"/>
        <end position="520"/>
    </location>
</feature>
<feature type="compositionally biased region" description="Low complexity" evidence="6">
    <location>
        <begin position="636"/>
        <end position="647"/>
    </location>
</feature>
<feature type="compositionally biased region" description="Basic and acidic residues" evidence="6">
    <location>
        <begin position="682"/>
        <end position="693"/>
    </location>
</feature>
<feature type="compositionally biased region" description="Basic residues" evidence="6">
    <location>
        <begin position="728"/>
        <end position="739"/>
    </location>
</feature>
<feature type="compositionally biased region" description="Low complexity" evidence="6">
    <location>
        <begin position="740"/>
        <end position="749"/>
    </location>
</feature>
<feature type="splice variant" id="VSP_052597" description="In isoform 2." evidence="7">
    <original>AGKSISTPQ</original>
    <variation>EFIFPSLLS</variation>
    <location>
        <begin position="388"/>
        <end position="396"/>
    </location>
</feature>
<feature type="splice variant" id="VSP_052598" description="In isoform 2." evidence="7">
    <location>
        <begin position="397"/>
        <end position="761"/>
    </location>
</feature>
<organism>
    <name type="scientific">Danio rerio</name>
    <name type="common">Zebrafish</name>
    <name type="synonym">Brachydanio rerio</name>
    <dbReference type="NCBI Taxonomy" id="7955"/>
    <lineage>
        <taxon>Eukaryota</taxon>
        <taxon>Metazoa</taxon>
        <taxon>Chordata</taxon>
        <taxon>Craniata</taxon>
        <taxon>Vertebrata</taxon>
        <taxon>Euteleostomi</taxon>
        <taxon>Actinopterygii</taxon>
        <taxon>Neopterygii</taxon>
        <taxon>Teleostei</taxon>
        <taxon>Ostariophysi</taxon>
        <taxon>Cypriniformes</taxon>
        <taxon>Danionidae</taxon>
        <taxon>Danioninae</taxon>
        <taxon>Danio</taxon>
    </lineage>
</organism>